<protein>
    <recommendedName>
        <fullName evidence="1">Probable cytosol aminopeptidase</fullName>
        <ecNumber evidence="1">3.4.11.1</ecNumber>
    </recommendedName>
    <alternativeName>
        <fullName evidence="1">Leucine aminopeptidase</fullName>
        <shortName evidence="1">LAP</shortName>
        <ecNumber evidence="1">3.4.11.10</ecNumber>
    </alternativeName>
    <alternativeName>
        <fullName evidence="1">Leucyl aminopeptidase</fullName>
    </alternativeName>
</protein>
<reference key="1">
    <citation type="journal article" date="2008" name="Genome Res.">
        <title>Comparative genome analysis of Salmonella enteritidis PT4 and Salmonella gallinarum 287/91 provides insights into evolutionary and host adaptation pathways.</title>
        <authorList>
            <person name="Thomson N.R."/>
            <person name="Clayton D.J."/>
            <person name="Windhorst D."/>
            <person name="Vernikos G."/>
            <person name="Davidson S."/>
            <person name="Churcher C."/>
            <person name="Quail M.A."/>
            <person name="Stevens M."/>
            <person name="Jones M.A."/>
            <person name="Watson M."/>
            <person name="Barron A."/>
            <person name="Layton A."/>
            <person name="Pickard D."/>
            <person name="Kingsley R.A."/>
            <person name="Bignell A."/>
            <person name="Clark L."/>
            <person name="Harris B."/>
            <person name="Ormond D."/>
            <person name="Abdellah Z."/>
            <person name="Brooks K."/>
            <person name="Cherevach I."/>
            <person name="Chillingworth T."/>
            <person name="Woodward J."/>
            <person name="Norberczak H."/>
            <person name="Lord A."/>
            <person name="Arrowsmith C."/>
            <person name="Jagels K."/>
            <person name="Moule S."/>
            <person name="Mungall K."/>
            <person name="Saunders M."/>
            <person name="Whitehead S."/>
            <person name="Chabalgoity J.A."/>
            <person name="Maskell D."/>
            <person name="Humphreys T."/>
            <person name="Roberts M."/>
            <person name="Barrow P.A."/>
            <person name="Dougan G."/>
            <person name="Parkhill J."/>
        </authorList>
    </citation>
    <scope>NUCLEOTIDE SEQUENCE [LARGE SCALE GENOMIC DNA]</scope>
    <source>
        <strain>P125109</strain>
    </source>
</reference>
<name>AMPA_SALEP</name>
<gene>
    <name evidence="1" type="primary">pepA</name>
    <name type="ordered locus">SEN4230</name>
</gene>
<evidence type="ECO:0000255" key="1">
    <source>
        <dbReference type="HAMAP-Rule" id="MF_00181"/>
    </source>
</evidence>
<dbReference type="EC" id="3.4.11.1" evidence="1"/>
<dbReference type="EC" id="3.4.11.10" evidence="1"/>
<dbReference type="EMBL" id="AM933172">
    <property type="protein sequence ID" value="CAR35785.1"/>
    <property type="molecule type" value="Genomic_DNA"/>
</dbReference>
<dbReference type="RefSeq" id="WP_000397158.1">
    <property type="nucleotide sequence ID" value="NC_011294.1"/>
</dbReference>
<dbReference type="SMR" id="B5R1K2"/>
<dbReference type="MEROPS" id="M17.003"/>
<dbReference type="KEGG" id="set:SEN4230"/>
<dbReference type="HOGENOM" id="CLU_013734_2_2_6"/>
<dbReference type="Proteomes" id="UP000000613">
    <property type="component" value="Chromosome"/>
</dbReference>
<dbReference type="GO" id="GO:0005737">
    <property type="term" value="C:cytoplasm"/>
    <property type="evidence" value="ECO:0007669"/>
    <property type="project" value="UniProtKB-SubCell"/>
</dbReference>
<dbReference type="GO" id="GO:0030145">
    <property type="term" value="F:manganese ion binding"/>
    <property type="evidence" value="ECO:0007669"/>
    <property type="project" value="UniProtKB-UniRule"/>
</dbReference>
<dbReference type="GO" id="GO:0070006">
    <property type="term" value="F:metalloaminopeptidase activity"/>
    <property type="evidence" value="ECO:0007669"/>
    <property type="project" value="InterPro"/>
</dbReference>
<dbReference type="GO" id="GO:0006508">
    <property type="term" value="P:proteolysis"/>
    <property type="evidence" value="ECO:0007669"/>
    <property type="project" value="UniProtKB-KW"/>
</dbReference>
<dbReference type="CDD" id="cd00433">
    <property type="entry name" value="Peptidase_M17"/>
    <property type="match status" value="1"/>
</dbReference>
<dbReference type="FunFam" id="3.40.220.10:FF:000001">
    <property type="entry name" value="Probable cytosol aminopeptidase"/>
    <property type="match status" value="1"/>
</dbReference>
<dbReference type="FunFam" id="3.40.630.10:FF:000004">
    <property type="entry name" value="Probable cytosol aminopeptidase"/>
    <property type="match status" value="1"/>
</dbReference>
<dbReference type="Gene3D" id="3.40.220.10">
    <property type="entry name" value="Leucine Aminopeptidase, subunit E, domain 1"/>
    <property type="match status" value="1"/>
</dbReference>
<dbReference type="Gene3D" id="3.40.630.10">
    <property type="entry name" value="Zn peptidases"/>
    <property type="match status" value="1"/>
</dbReference>
<dbReference type="HAMAP" id="MF_00181">
    <property type="entry name" value="Cytosol_peptidase_M17"/>
    <property type="match status" value="1"/>
</dbReference>
<dbReference type="InterPro" id="IPR011356">
    <property type="entry name" value="Leucine_aapep/pepB"/>
</dbReference>
<dbReference type="InterPro" id="IPR043472">
    <property type="entry name" value="Macro_dom-like"/>
</dbReference>
<dbReference type="InterPro" id="IPR000819">
    <property type="entry name" value="Peptidase_M17_C"/>
</dbReference>
<dbReference type="InterPro" id="IPR023042">
    <property type="entry name" value="Peptidase_M17_leu_NH2_pept"/>
</dbReference>
<dbReference type="InterPro" id="IPR008283">
    <property type="entry name" value="Peptidase_M17_N"/>
</dbReference>
<dbReference type="NCBIfam" id="NF002072">
    <property type="entry name" value="PRK00913.1-1"/>
    <property type="match status" value="1"/>
</dbReference>
<dbReference type="NCBIfam" id="NF002073">
    <property type="entry name" value="PRK00913.1-2"/>
    <property type="match status" value="1"/>
</dbReference>
<dbReference type="NCBIfam" id="NF002074">
    <property type="entry name" value="PRK00913.1-4"/>
    <property type="match status" value="1"/>
</dbReference>
<dbReference type="PANTHER" id="PTHR11963:SF23">
    <property type="entry name" value="CYTOSOL AMINOPEPTIDASE"/>
    <property type="match status" value="1"/>
</dbReference>
<dbReference type="PANTHER" id="PTHR11963">
    <property type="entry name" value="LEUCINE AMINOPEPTIDASE-RELATED"/>
    <property type="match status" value="1"/>
</dbReference>
<dbReference type="Pfam" id="PF00883">
    <property type="entry name" value="Peptidase_M17"/>
    <property type="match status" value="1"/>
</dbReference>
<dbReference type="Pfam" id="PF02789">
    <property type="entry name" value="Peptidase_M17_N"/>
    <property type="match status" value="1"/>
</dbReference>
<dbReference type="PRINTS" id="PR00481">
    <property type="entry name" value="LAMNOPPTDASE"/>
</dbReference>
<dbReference type="SUPFAM" id="SSF52949">
    <property type="entry name" value="Macro domain-like"/>
    <property type="match status" value="1"/>
</dbReference>
<dbReference type="SUPFAM" id="SSF53187">
    <property type="entry name" value="Zn-dependent exopeptidases"/>
    <property type="match status" value="1"/>
</dbReference>
<dbReference type="PROSITE" id="PS00631">
    <property type="entry name" value="CYTOSOL_AP"/>
    <property type="match status" value="1"/>
</dbReference>
<feature type="chain" id="PRO_1000098345" description="Probable cytosol aminopeptidase">
    <location>
        <begin position="1"/>
        <end position="503"/>
    </location>
</feature>
<feature type="active site" evidence="1">
    <location>
        <position position="282"/>
    </location>
</feature>
<feature type="active site" evidence="1">
    <location>
        <position position="356"/>
    </location>
</feature>
<feature type="binding site" evidence="1">
    <location>
        <position position="270"/>
    </location>
    <ligand>
        <name>Mn(2+)</name>
        <dbReference type="ChEBI" id="CHEBI:29035"/>
        <label>2</label>
    </ligand>
</feature>
<feature type="binding site" evidence="1">
    <location>
        <position position="275"/>
    </location>
    <ligand>
        <name>Mn(2+)</name>
        <dbReference type="ChEBI" id="CHEBI:29035"/>
        <label>1</label>
    </ligand>
</feature>
<feature type="binding site" evidence="1">
    <location>
        <position position="275"/>
    </location>
    <ligand>
        <name>Mn(2+)</name>
        <dbReference type="ChEBI" id="CHEBI:29035"/>
        <label>2</label>
    </ligand>
</feature>
<feature type="binding site" evidence="1">
    <location>
        <position position="293"/>
    </location>
    <ligand>
        <name>Mn(2+)</name>
        <dbReference type="ChEBI" id="CHEBI:29035"/>
        <label>2</label>
    </ligand>
</feature>
<feature type="binding site" evidence="1">
    <location>
        <position position="352"/>
    </location>
    <ligand>
        <name>Mn(2+)</name>
        <dbReference type="ChEBI" id="CHEBI:29035"/>
        <label>1</label>
    </ligand>
</feature>
<feature type="binding site" evidence="1">
    <location>
        <position position="354"/>
    </location>
    <ligand>
        <name>Mn(2+)</name>
        <dbReference type="ChEBI" id="CHEBI:29035"/>
        <label>1</label>
    </ligand>
</feature>
<feature type="binding site" evidence="1">
    <location>
        <position position="354"/>
    </location>
    <ligand>
        <name>Mn(2+)</name>
        <dbReference type="ChEBI" id="CHEBI:29035"/>
        <label>2</label>
    </ligand>
</feature>
<organism>
    <name type="scientific">Salmonella enteritidis PT4 (strain P125109)</name>
    <dbReference type="NCBI Taxonomy" id="550537"/>
    <lineage>
        <taxon>Bacteria</taxon>
        <taxon>Pseudomonadati</taxon>
        <taxon>Pseudomonadota</taxon>
        <taxon>Gammaproteobacteria</taxon>
        <taxon>Enterobacterales</taxon>
        <taxon>Enterobacteriaceae</taxon>
        <taxon>Salmonella</taxon>
    </lineage>
</organism>
<sequence>MEFSVKSGSPEKQRSACIVVGVFEPRRLSPIAEQLDKISDGYISALLRRGELEGKPGQTLLLHHVPNVLSERILLIGCGKERELDERQYKQVIQKTINTLNDTGSMEAVCFLTELHVKGRNNYWKVRQAVETAKETLYSFDQLKTNKSEPRRPLRKMVFNVPTRRELTSGERAIQHGLAIAAGIKAAKDLGNMPPNICNAAYLASQARQLADSYSKNVITRVIGEQQMRELGMNAYLAVGHGSQNESLMSVIEYKGNPSEDARPIVLVGKGLTFDSGGISIKPSEGMDEMKYDMCGAAAVYGVMRMVAELQLPINVIGVLAGCENMPGGRAYRPGDVLTTMSGQTVEVLNTDAEGRLVLCDVLTYVERFEPEAVIDVATLTGACVIALGHHITGLMSNHNPLAHELIGASEQAGDRAWRLPLGDEFQEQLESNFADMANIGGRPGGAITAGCFLSRFTRKYNWAHLDIAGTAWRSGKAKGATGRPVALLSQFLLNRAGFNGEE</sequence>
<comment type="function">
    <text evidence="1">Presumably involved in the processing and regular turnover of intracellular proteins. Catalyzes the removal of unsubstituted N-terminal amino acids from various peptides.</text>
</comment>
<comment type="catalytic activity">
    <reaction evidence="1">
        <text>Release of an N-terminal amino acid, Xaa-|-Yaa-, in which Xaa is preferably Leu, but may be other amino acids including Pro although not Arg or Lys, and Yaa may be Pro. Amino acid amides and methyl esters are also readily hydrolyzed, but rates on arylamides are exceedingly low.</text>
        <dbReference type="EC" id="3.4.11.1"/>
    </reaction>
</comment>
<comment type="catalytic activity">
    <reaction evidence="1">
        <text>Release of an N-terminal amino acid, preferentially leucine, but not glutamic or aspartic acids.</text>
        <dbReference type="EC" id="3.4.11.10"/>
    </reaction>
</comment>
<comment type="cofactor">
    <cofactor evidence="1">
        <name>Mn(2+)</name>
        <dbReference type="ChEBI" id="CHEBI:29035"/>
    </cofactor>
    <text evidence="1">Binds 2 manganese ions per subunit.</text>
</comment>
<comment type="subcellular location">
    <subcellularLocation>
        <location evidence="1">Cytoplasm</location>
    </subcellularLocation>
</comment>
<comment type="similarity">
    <text evidence="1">Belongs to the peptidase M17 family.</text>
</comment>
<proteinExistence type="inferred from homology"/>
<accession>B5R1K2</accession>
<keyword id="KW-0031">Aminopeptidase</keyword>
<keyword id="KW-0963">Cytoplasm</keyword>
<keyword id="KW-0378">Hydrolase</keyword>
<keyword id="KW-0464">Manganese</keyword>
<keyword id="KW-0479">Metal-binding</keyword>
<keyword id="KW-0645">Protease</keyword>